<evidence type="ECO:0000255" key="1">
    <source>
        <dbReference type="HAMAP-Rule" id="MF_00258"/>
    </source>
</evidence>
<reference key="1">
    <citation type="journal article" date="2001" name="Science">
        <title>Comparative genomics of Listeria species.</title>
        <authorList>
            <person name="Glaser P."/>
            <person name="Frangeul L."/>
            <person name="Buchrieser C."/>
            <person name="Rusniok C."/>
            <person name="Amend A."/>
            <person name="Baquero F."/>
            <person name="Berche P."/>
            <person name="Bloecker H."/>
            <person name="Brandt P."/>
            <person name="Chakraborty T."/>
            <person name="Charbit A."/>
            <person name="Chetouani F."/>
            <person name="Couve E."/>
            <person name="de Daruvar A."/>
            <person name="Dehoux P."/>
            <person name="Domann E."/>
            <person name="Dominguez-Bernal G."/>
            <person name="Duchaud E."/>
            <person name="Durant L."/>
            <person name="Dussurget O."/>
            <person name="Entian K.-D."/>
            <person name="Fsihi H."/>
            <person name="Garcia-del Portillo F."/>
            <person name="Garrido P."/>
            <person name="Gautier L."/>
            <person name="Goebel W."/>
            <person name="Gomez-Lopez N."/>
            <person name="Hain T."/>
            <person name="Hauf J."/>
            <person name="Jackson D."/>
            <person name="Jones L.-M."/>
            <person name="Kaerst U."/>
            <person name="Kreft J."/>
            <person name="Kuhn M."/>
            <person name="Kunst F."/>
            <person name="Kurapkat G."/>
            <person name="Madueno E."/>
            <person name="Maitournam A."/>
            <person name="Mata Vicente J."/>
            <person name="Ng E."/>
            <person name="Nedjari H."/>
            <person name="Nordsiek G."/>
            <person name="Novella S."/>
            <person name="de Pablos B."/>
            <person name="Perez-Diaz J.-C."/>
            <person name="Purcell R."/>
            <person name="Remmel B."/>
            <person name="Rose M."/>
            <person name="Schlueter T."/>
            <person name="Simoes N."/>
            <person name="Tierrez A."/>
            <person name="Vazquez-Boland J.-A."/>
            <person name="Voss H."/>
            <person name="Wehland J."/>
            <person name="Cossart P."/>
        </authorList>
    </citation>
    <scope>NUCLEOTIDE SEQUENCE [LARGE SCALE GENOMIC DNA]</scope>
    <source>
        <strain>ATCC BAA-680 / CLIP 11262</strain>
    </source>
</reference>
<dbReference type="EC" id="5.1.1.3" evidence="1"/>
<dbReference type="EMBL" id="AL596167">
    <property type="protein sequence ID" value="CAC96431.1"/>
    <property type="molecule type" value="Genomic_DNA"/>
</dbReference>
<dbReference type="PIR" id="AG1582">
    <property type="entry name" value="AG1582"/>
</dbReference>
<dbReference type="RefSeq" id="WP_003761886.1">
    <property type="nucleotide sequence ID" value="NC_003212.1"/>
</dbReference>
<dbReference type="SMR" id="Q92CH2"/>
<dbReference type="STRING" id="272626.gene:17565530"/>
<dbReference type="GeneID" id="93234648"/>
<dbReference type="KEGG" id="lin:racE"/>
<dbReference type="eggNOG" id="COG0796">
    <property type="taxonomic scope" value="Bacteria"/>
</dbReference>
<dbReference type="HOGENOM" id="CLU_052344_0_2_9"/>
<dbReference type="OrthoDB" id="9801055at2"/>
<dbReference type="UniPathway" id="UPA00219"/>
<dbReference type="Proteomes" id="UP000002513">
    <property type="component" value="Chromosome"/>
</dbReference>
<dbReference type="GO" id="GO:0008881">
    <property type="term" value="F:glutamate racemase activity"/>
    <property type="evidence" value="ECO:0007669"/>
    <property type="project" value="UniProtKB-UniRule"/>
</dbReference>
<dbReference type="GO" id="GO:0071555">
    <property type="term" value="P:cell wall organization"/>
    <property type="evidence" value="ECO:0007669"/>
    <property type="project" value="UniProtKB-KW"/>
</dbReference>
<dbReference type="GO" id="GO:0009252">
    <property type="term" value="P:peptidoglycan biosynthetic process"/>
    <property type="evidence" value="ECO:0007669"/>
    <property type="project" value="UniProtKB-UniRule"/>
</dbReference>
<dbReference type="GO" id="GO:0008360">
    <property type="term" value="P:regulation of cell shape"/>
    <property type="evidence" value="ECO:0007669"/>
    <property type="project" value="UniProtKB-KW"/>
</dbReference>
<dbReference type="FunFam" id="3.40.50.1860:FF:000002">
    <property type="entry name" value="Glutamate racemase"/>
    <property type="match status" value="1"/>
</dbReference>
<dbReference type="Gene3D" id="3.40.50.1860">
    <property type="match status" value="2"/>
</dbReference>
<dbReference type="HAMAP" id="MF_00258">
    <property type="entry name" value="Glu_racemase"/>
    <property type="match status" value="1"/>
</dbReference>
<dbReference type="InterPro" id="IPR015942">
    <property type="entry name" value="Asp/Glu/hydantoin_racemase"/>
</dbReference>
<dbReference type="InterPro" id="IPR001920">
    <property type="entry name" value="Asp/Glu_race"/>
</dbReference>
<dbReference type="InterPro" id="IPR018187">
    <property type="entry name" value="Asp/Glu_racemase_AS_1"/>
</dbReference>
<dbReference type="InterPro" id="IPR033134">
    <property type="entry name" value="Asp/Glu_racemase_AS_2"/>
</dbReference>
<dbReference type="InterPro" id="IPR004391">
    <property type="entry name" value="Glu_race"/>
</dbReference>
<dbReference type="NCBIfam" id="TIGR00067">
    <property type="entry name" value="glut_race"/>
    <property type="match status" value="1"/>
</dbReference>
<dbReference type="NCBIfam" id="NF002035">
    <property type="entry name" value="PRK00865.1-3"/>
    <property type="match status" value="1"/>
</dbReference>
<dbReference type="PANTHER" id="PTHR21198">
    <property type="entry name" value="GLUTAMATE RACEMASE"/>
    <property type="match status" value="1"/>
</dbReference>
<dbReference type="PANTHER" id="PTHR21198:SF2">
    <property type="entry name" value="GLUTAMATE RACEMASE"/>
    <property type="match status" value="1"/>
</dbReference>
<dbReference type="Pfam" id="PF01177">
    <property type="entry name" value="Asp_Glu_race"/>
    <property type="match status" value="1"/>
</dbReference>
<dbReference type="SUPFAM" id="SSF53681">
    <property type="entry name" value="Aspartate/glutamate racemase"/>
    <property type="match status" value="2"/>
</dbReference>
<dbReference type="PROSITE" id="PS00923">
    <property type="entry name" value="ASP_GLU_RACEMASE_1"/>
    <property type="match status" value="1"/>
</dbReference>
<dbReference type="PROSITE" id="PS00924">
    <property type="entry name" value="ASP_GLU_RACEMASE_2"/>
    <property type="match status" value="1"/>
</dbReference>
<sequence length="266" mass="29146">MKQAIGFIDSGVGGLTVVREVLKQLPHEQVYYLGDTARCPYGPRDKEEVAQFTWEMTNFLVDRGIKMLVIACNTATAAALYDIREKLDIPVIGVIQPGSRAALKATRNNKIGVLGTLGTVESMAYPTALKGLNRRVEVDSLACPKFVSVVESGEYKSAIAKKVVAESLLPLKSTKIDTVILGCTHYPLLKPIIENFMGDGVAVINSGEETASEVSALLDYHNLLDATDDEIEHRFFTTGSTQIFKDIAKDWLNMPDMTVEHIKLGK</sequence>
<gene>
    <name evidence="1" type="primary">murI</name>
    <name type="synonym">racE</name>
    <name type="ordered locus">lin1200</name>
</gene>
<keyword id="KW-0133">Cell shape</keyword>
<keyword id="KW-0961">Cell wall biogenesis/degradation</keyword>
<keyword id="KW-0413">Isomerase</keyword>
<keyword id="KW-0573">Peptidoglycan synthesis</keyword>
<name>MURI_LISIN</name>
<proteinExistence type="inferred from homology"/>
<protein>
    <recommendedName>
        <fullName evidence="1">Glutamate racemase</fullName>
        <ecNumber evidence="1">5.1.1.3</ecNumber>
    </recommendedName>
</protein>
<feature type="chain" id="PRO_0000095485" description="Glutamate racemase">
    <location>
        <begin position="1"/>
        <end position="266"/>
    </location>
</feature>
<feature type="active site" description="Proton donor/acceptor" evidence="1">
    <location>
        <position position="72"/>
    </location>
</feature>
<feature type="active site" description="Proton donor/acceptor" evidence="1">
    <location>
        <position position="183"/>
    </location>
</feature>
<feature type="binding site" evidence="1">
    <location>
        <begin position="9"/>
        <end position="10"/>
    </location>
    <ligand>
        <name>substrate</name>
    </ligand>
</feature>
<feature type="binding site" evidence="1">
    <location>
        <begin position="41"/>
        <end position="42"/>
    </location>
    <ligand>
        <name>substrate</name>
    </ligand>
</feature>
<feature type="binding site" evidence="1">
    <location>
        <begin position="73"/>
        <end position="74"/>
    </location>
    <ligand>
        <name>substrate</name>
    </ligand>
</feature>
<feature type="binding site" evidence="1">
    <location>
        <begin position="184"/>
        <end position="185"/>
    </location>
    <ligand>
        <name>substrate</name>
    </ligand>
</feature>
<accession>Q92CH2</accession>
<comment type="function">
    <text evidence="1">Provides the (R)-glutamate required for cell wall biosynthesis.</text>
</comment>
<comment type="catalytic activity">
    <reaction evidence="1">
        <text>L-glutamate = D-glutamate</text>
        <dbReference type="Rhea" id="RHEA:12813"/>
        <dbReference type="ChEBI" id="CHEBI:29985"/>
        <dbReference type="ChEBI" id="CHEBI:29986"/>
        <dbReference type="EC" id="5.1.1.3"/>
    </reaction>
</comment>
<comment type="pathway">
    <text evidence="1">Cell wall biogenesis; peptidoglycan biosynthesis.</text>
</comment>
<comment type="similarity">
    <text evidence="1">Belongs to the aspartate/glutamate racemases family.</text>
</comment>
<organism>
    <name type="scientific">Listeria innocua serovar 6a (strain ATCC BAA-680 / CLIP 11262)</name>
    <dbReference type="NCBI Taxonomy" id="272626"/>
    <lineage>
        <taxon>Bacteria</taxon>
        <taxon>Bacillati</taxon>
        <taxon>Bacillota</taxon>
        <taxon>Bacilli</taxon>
        <taxon>Bacillales</taxon>
        <taxon>Listeriaceae</taxon>
        <taxon>Listeria</taxon>
    </lineage>
</organism>